<dbReference type="EMBL" id="X58563">
    <property type="protein sequence ID" value="CAA41443.1"/>
    <property type="molecule type" value="mRNA"/>
</dbReference>
<dbReference type="PIR" id="S14873">
    <property type="entry name" value="S14873"/>
</dbReference>
<dbReference type="RefSeq" id="NP_001075970.1">
    <property type="nucleotide sequence ID" value="NM_001082501.2"/>
</dbReference>
<dbReference type="SMR" id="P27104"/>
<dbReference type="FunCoup" id="P27104">
    <property type="interactions" value="202"/>
</dbReference>
<dbReference type="STRING" id="9796.ENSECAP00000012495"/>
<dbReference type="PaxDb" id="9796-ENSECAP00000012495"/>
<dbReference type="Ensembl" id="ENSECAT00000015536.3">
    <property type="protein sequence ID" value="ENSECAP00000012495.1"/>
    <property type="gene ID" value="ENSECAG00000014892.4"/>
</dbReference>
<dbReference type="GeneID" id="100034201"/>
<dbReference type="KEGG" id="ecb:100034201"/>
<dbReference type="CTD" id="4878"/>
<dbReference type="VGNC" id="VGNC:20844">
    <property type="gene designation" value="NPPA"/>
</dbReference>
<dbReference type="GeneTree" id="ENSGT00940000154513"/>
<dbReference type="HOGENOM" id="CLU_144536_0_0_1"/>
<dbReference type="InParanoid" id="P27104"/>
<dbReference type="OMA" id="GPWDASD"/>
<dbReference type="OrthoDB" id="8865096at2759"/>
<dbReference type="TreeFam" id="TF106304"/>
<dbReference type="Proteomes" id="UP000002281">
    <property type="component" value="Chromosome 2"/>
</dbReference>
<dbReference type="Bgee" id="ENSECAG00000014892">
    <property type="expression patterns" value="Expressed in testis and 4 other cell types or tissues"/>
</dbReference>
<dbReference type="GO" id="GO:0042995">
    <property type="term" value="C:cell projection"/>
    <property type="evidence" value="ECO:0007669"/>
    <property type="project" value="UniProtKB-SubCell"/>
</dbReference>
<dbReference type="GO" id="GO:0005737">
    <property type="term" value="C:cytoplasm"/>
    <property type="evidence" value="ECO:0000318"/>
    <property type="project" value="GO_Central"/>
</dbReference>
<dbReference type="GO" id="GO:0005615">
    <property type="term" value="C:extracellular space"/>
    <property type="evidence" value="ECO:0000318"/>
    <property type="project" value="GO_Central"/>
</dbReference>
<dbReference type="GO" id="GO:0043204">
    <property type="term" value="C:perikaryon"/>
    <property type="evidence" value="ECO:0007669"/>
    <property type="project" value="UniProtKB-SubCell"/>
</dbReference>
<dbReference type="GO" id="GO:0032991">
    <property type="term" value="C:protein-containing complex"/>
    <property type="evidence" value="ECO:0007669"/>
    <property type="project" value="Ensembl"/>
</dbReference>
<dbReference type="GO" id="GO:0005179">
    <property type="term" value="F:hormone activity"/>
    <property type="evidence" value="ECO:0000318"/>
    <property type="project" value="GO_Central"/>
</dbReference>
<dbReference type="GO" id="GO:0051427">
    <property type="term" value="F:hormone receptor binding"/>
    <property type="evidence" value="ECO:0000318"/>
    <property type="project" value="GO_Central"/>
</dbReference>
<dbReference type="GO" id="GO:0005184">
    <property type="term" value="F:neuropeptide hormone activity"/>
    <property type="evidence" value="ECO:0007669"/>
    <property type="project" value="Ensembl"/>
</dbReference>
<dbReference type="GO" id="GO:0071855">
    <property type="term" value="F:neuropeptide receptor binding"/>
    <property type="evidence" value="ECO:0007669"/>
    <property type="project" value="Ensembl"/>
</dbReference>
<dbReference type="GO" id="GO:0014898">
    <property type="term" value="P:cardiac muscle hypertrophy in response to stress"/>
    <property type="evidence" value="ECO:0007669"/>
    <property type="project" value="Ensembl"/>
</dbReference>
<dbReference type="GO" id="GO:0006182">
    <property type="term" value="P:cGMP biosynthetic process"/>
    <property type="evidence" value="ECO:0000250"/>
    <property type="project" value="UniProtKB"/>
</dbReference>
<dbReference type="GO" id="GO:0019934">
    <property type="term" value="P:cGMP-mediated signaling"/>
    <property type="evidence" value="ECO:0000318"/>
    <property type="project" value="GO_Central"/>
</dbReference>
<dbReference type="GO" id="GO:0007565">
    <property type="term" value="P:female pregnancy"/>
    <property type="evidence" value="ECO:0000250"/>
    <property type="project" value="UniProtKB"/>
</dbReference>
<dbReference type="GO" id="GO:0003085">
    <property type="term" value="P:negative regulation of systemic arterial blood pressure"/>
    <property type="evidence" value="ECO:0000318"/>
    <property type="project" value="GO_Central"/>
</dbReference>
<dbReference type="GO" id="GO:0007218">
    <property type="term" value="P:neuropeptide signaling pathway"/>
    <property type="evidence" value="ECO:0000318"/>
    <property type="project" value="GO_Central"/>
</dbReference>
<dbReference type="GO" id="GO:0060452">
    <property type="term" value="P:positive regulation of cardiac muscle contraction"/>
    <property type="evidence" value="ECO:0007669"/>
    <property type="project" value="Ensembl"/>
</dbReference>
<dbReference type="GO" id="GO:0010460">
    <property type="term" value="P:positive regulation of heart rate"/>
    <property type="evidence" value="ECO:0007669"/>
    <property type="project" value="Ensembl"/>
</dbReference>
<dbReference type="GO" id="GO:1903766">
    <property type="term" value="P:positive regulation of potassium ion export across plasma membrane"/>
    <property type="evidence" value="ECO:0007669"/>
    <property type="project" value="Ensembl"/>
</dbReference>
<dbReference type="GO" id="GO:0006457">
    <property type="term" value="P:protein folding"/>
    <property type="evidence" value="ECO:0007669"/>
    <property type="project" value="Ensembl"/>
</dbReference>
<dbReference type="GO" id="GO:0007168">
    <property type="term" value="P:receptor guanylyl cyclase signaling pathway"/>
    <property type="evidence" value="ECO:0000250"/>
    <property type="project" value="UniProtKB"/>
</dbReference>
<dbReference type="GO" id="GO:0060372">
    <property type="term" value="P:regulation of atrial cardiac muscle cell membrane repolarization"/>
    <property type="evidence" value="ECO:0007669"/>
    <property type="project" value="Ensembl"/>
</dbReference>
<dbReference type="GO" id="GO:0008217">
    <property type="term" value="P:regulation of blood pressure"/>
    <property type="evidence" value="ECO:0000250"/>
    <property type="project" value="UniProtKB"/>
</dbReference>
<dbReference type="GO" id="GO:0036376">
    <property type="term" value="P:sodium ion export across plasma membrane"/>
    <property type="evidence" value="ECO:0007669"/>
    <property type="project" value="Ensembl"/>
</dbReference>
<dbReference type="GO" id="GO:0042311">
    <property type="term" value="P:vasodilation"/>
    <property type="evidence" value="ECO:0007669"/>
    <property type="project" value="UniProtKB-KW"/>
</dbReference>
<dbReference type="InterPro" id="IPR000663">
    <property type="entry name" value="Natr_peptide"/>
</dbReference>
<dbReference type="InterPro" id="IPR030480">
    <property type="entry name" value="Natr_peptide_CS"/>
</dbReference>
<dbReference type="InterPro" id="IPR050787">
    <property type="entry name" value="Natriuretic_peptide"/>
</dbReference>
<dbReference type="InterPro" id="IPR002407">
    <property type="entry name" value="Natriuretic_peptide_atrial"/>
</dbReference>
<dbReference type="PANTHER" id="PTHR14066">
    <property type="entry name" value="ATRIAL NATRIURETIC FACTOR PRECURSOR"/>
    <property type="match status" value="1"/>
</dbReference>
<dbReference type="PANTHER" id="PTHR14066:SF2">
    <property type="entry name" value="NATRIURETIC PEPTIDES A"/>
    <property type="match status" value="1"/>
</dbReference>
<dbReference type="Pfam" id="PF00212">
    <property type="entry name" value="ANP"/>
    <property type="match status" value="1"/>
</dbReference>
<dbReference type="PRINTS" id="PR00711">
    <property type="entry name" value="ANATPEPTIDE"/>
</dbReference>
<dbReference type="PRINTS" id="PR00710">
    <property type="entry name" value="NATPEPTIDES"/>
</dbReference>
<dbReference type="SMART" id="SM00183">
    <property type="entry name" value="NAT_PEP"/>
    <property type="match status" value="1"/>
</dbReference>
<dbReference type="PROSITE" id="PS00263">
    <property type="entry name" value="NATRIURETIC_PEPTIDE"/>
    <property type="match status" value="1"/>
</dbReference>
<keyword id="KW-0966">Cell projection</keyword>
<keyword id="KW-1015">Disulfide bond</keyword>
<keyword id="KW-0372">Hormone</keyword>
<keyword id="KW-0597">Phosphoprotein</keyword>
<keyword id="KW-1185">Reference proteome</keyword>
<keyword id="KW-0964">Secreted</keyword>
<keyword id="KW-0732">Signal</keyword>
<keyword id="KW-0838">Vasoactive</keyword>
<keyword id="KW-0840">Vasodilator</keyword>
<accession>P27104</accession>
<gene>
    <name type="primary">NPPA</name>
</gene>
<proteinExistence type="evidence at transcript level"/>
<evidence type="ECO:0000250" key="1">
    <source>
        <dbReference type="UniProtKB" id="P01160"/>
    </source>
</evidence>
<evidence type="ECO:0000250" key="2">
    <source>
        <dbReference type="UniProtKB" id="P01161"/>
    </source>
</evidence>
<evidence type="ECO:0000250" key="3">
    <source>
        <dbReference type="UniProtKB" id="P05125"/>
    </source>
</evidence>
<evidence type="ECO:0000250" key="4">
    <source>
        <dbReference type="UniProtKB" id="P24259"/>
    </source>
</evidence>
<evidence type="ECO:0000256" key="5">
    <source>
        <dbReference type="SAM" id="MobiDB-lite"/>
    </source>
</evidence>
<evidence type="ECO:0000305" key="6"/>
<feature type="signal peptide" evidence="4">
    <location>
        <begin position="1"/>
        <end position="25"/>
    </location>
</feature>
<feature type="chain" id="PRO_0000449708" description="Natriuretic peptides A" evidence="1">
    <location>
        <begin position="26"/>
        <end position="151"/>
    </location>
</feature>
<feature type="propeptide" id="PRO_0000001490" evidence="6">
    <location>
        <begin position="26"/>
        <end position="123"/>
    </location>
</feature>
<feature type="peptide" id="PRO_0000449709" description="Long-acting natriuretic peptide" evidence="1">
    <location>
        <begin position="26"/>
        <end position="55"/>
    </location>
</feature>
<feature type="peptide" id="PRO_0000449710" description="Vessel dilator" evidence="1">
    <location>
        <begin position="56"/>
        <end position="92"/>
    </location>
</feature>
<feature type="propeptide" id="PRO_0000449711" evidence="1">
    <location>
        <begin position="93"/>
        <end position="103"/>
    </location>
</feature>
<feature type="peptide" id="PRO_0000449712" description="Kaliuretic peptide" evidence="1">
    <location>
        <begin position="104"/>
        <end position="123"/>
    </location>
</feature>
<feature type="peptide" id="PRO_0000449713" description="Auriculin-C" evidence="2">
    <location>
        <begin position="119"/>
        <end position="151"/>
    </location>
</feature>
<feature type="peptide" id="PRO_0000449714" description="Urodilatin" evidence="1">
    <location>
        <begin position="120"/>
        <end position="151"/>
    </location>
</feature>
<feature type="peptide" id="PRO_0000449715" description="Auriculin-D" evidence="2">
    <location>
        <begin position="121"/>
        <end position="145"/>
    </location>
</feature>
<feature type="peptide" id="PRO_0000001491" description="Atrial natriuretic peptide" evidence="1">
    <location>
        <begin position="124"/>
        <end position="151"/>
    </location>
</feature>
<feature type="peptide" id="PRO_0000449716" description="Auriculin-B" evidence="2">
    <location>
        <begin position="127"/>
        <end position="151"/>
    </location>
</feature>
<feature type="peptide" id="PRO_0000449717" description="Auriculin-A" evidence="2">
    <location>
        <begin position="127"/>
        <end position="150"/>
    </location>
</feature>
<feature type="peptide" id="PRO_0000449718" description="Atriopeptin-3" evidence="2">
    <location>
        <begin position="128"/>
        <end position="151"/>
    </location>
</feature>
<feature type="peptide" id="PRO_0000449719" description="Atriopeptin-2" evidence="2">
    <location>
        <begin position="128"/>
        <end position="150"/>
    </location>
</feature>
<feature type="peptide" id="PRO_0000449720" description="Atriopeptin-1" evidence="2">
    <location>
        <begin position="128"/>
        <end position="148"/>
    </location>
</feature>
<feature type="region of interest" description="Disordered" evidence="5">
    <location>
        <begin position="54"/>
        <end position="105"/>
    </location>
</feature>
<feature type="region of interest" description="Important for degradation of atrial natriuretic peptide by IDE" evidence="1">
    <location>
        <begin position="147"/>
        <end position="151"/>
    </location>
</feature>
<feature type="site" description="Cleavage; by CORIN" evidence="1">
    <location>
        <begin position="123"/>
        <end position="124"/>
    </location>
</feature>
<feature type="site" description="Cleavage; by MME" evidence="1">
    <location>
        <begin position="130"/>
        <end position="131"/>
    </location>
</feature>
<feature type="modified residue" description="Phosphoserine" evidence="1">
    <location>
        <position position="129"/>
    </location>
</feature>
<feature type="disulfide bond" evidence="1">
    <location>
        <begin position="130"/>
        <end position="146"/>
    </location>
</feature>
<reference key="1">
    <citation type="submission" date="1991-03" db="EMBL/GenBank/DDBJ databases">
        <authorList>
            <person name="Maegert H.-J."/>
            <person name="Richter R."/>
            <person name="Schmaeding G."/>
            <person name="Forssmann W.-G."/>
        </authorList>
    </citation>
    <scope>NUCLEOTIDE SEQUENCE [MRNA]</scope>
    <source>
        <strain>Adamiticus</strain>
        <tissue>Heart atrium</tissue>
    </source>
</reference>
<protein>
    <recommendedName>
        <fullName evidence="6">Natriuretic peptides A</fullName>
    </recommendedName>
    <alternativeName>
        <fullName evidence="1">Atrial natriuretic factor prohormone</fullName>
        <shortName evidence="2">preproANF</shortName>
        <shortName evidence="1">proANF</shortName>
    </alternativeName>
    <alternativeName>
        <fullName evidence="1">Atrial natriuretic peptide prohormone</fullName>
        <shortName evidence="1">preproANP</shortName>
        <shortName evidence="1">proANP</shortName>
    </alternativeName>
    <alternativeName>
        <fullName evidence="2">Atriopeptigen</fullName>
    </alternativeName>
    <alternativeName>
        <fullName evidence="1">Cardiodilatin</fullName>
        <shortName evidence="1">CDD</shortName>
    </alternativeName>
    <alternativeName>
        <fullName evidence="1">preproCDD-ANF</fullName>
    </alternativeName>
    <component>
        <recommendedName>
            <fullName evidence="1">Long-acting natriuretic peptide</fullName>
            <shortName evidence="1">LANP</shortName>
        </recommendedName>
        <alternativeName>
            <fullName evidence="6">Long-acting natriuretic hormone</fullName>
            <shortName evidence="6">LANH</shortName>
        </alternativeName>
        <alternativeName>
            <fullName evidence="1">Pro atrial natriuretic factor 1-30</fullName>
            <shortName evidence="1">proANF 1-30</shortName>
        </alternativeName>
        <alternativeName>
            <fullName evidence="6">Pro atrial natriuretic peptide 1-30</fullName>
            <shortName evidence="6">proANP 1-30</shortName>
        </alternativeName>
    </component>
    <component>
        <recommendedName>
            <fullName evidence="1">Vessel dilator</fullName>
            <shortName evidence="1">VSDL</shortName>
        </recommendedName>
        <alternativeName>
            <fullName evidence="1">Pro atrial natriuretic factor 31-67</fullName>
            <shortName evidence="1">proANF 31-67</shortName>
        </alternativeName>
        <alternativeName>
            <fullName evidence="6">Pro atrial natriuretic peptide 31-67</fullName>
            <shortName evidence="6">proANP 31-67</shortName>
        </alternativeName>
    </component>
    <component>
        <recommendedName>
            <fullName evidence="1">Kaliuretic peptide</fullName>
            <shortName evidence="1">KP</shortName>
        </recommendedName>
        <alternativeName>
            <fullName evidence="1">Pro atrial natriuretic factor 79-98</fullName>
            <shortName evidence="1">proANF 79-98</shortName>
        </alternativeName>
        <alternativeName>
            <fullName evidence="6">Pro atrial natriuretic peptide 79-98</fullName>
            <shortName evidence="6">proANP 79-98</shortName>
        </alternativeName>
    </component>
    <component>
        <recommendedName>
            <fullName evidence="1">Urodilatin</fullName>
            <shortName evidence="1">URO</shortName>
        </recommendedName>
        <alternativeName>
            <fullName evidence="1">CDD 95-126</fullName>
        </alternativeName>
        <alternativeName>
            <fullName evidence="1">CDD-ANP (95-126)</fullName>
        </alternativeName>
        <alternativeName>
            <fullName evidence="1">Pro atrial natriuretic peptide 95-126</fullName>
            <shortName evidence="1">proANP 95-126</shortName>
        </alternativeName>
    </component>
    <component>
        <recommendedName>
            <fullName evidence="6">Auriculin-C</fullName>
        </recommendedName>
        <alternativeName>
            <fullName evidence="2">Atrial natriuretic factor 1-33</fullName>
            <shortName evidence="2">ANF 1-33</shortName>
        </alternativeName>
    </component>
    <component>
        <recommendedName>
            <fullName evidence="6">Auriculin-D</fullName>
        </recommendedName>
        <alternativeName>
            <fullName evidence="2">Atrial natriuretic factor 3-33</fullName>
            <shortName evidence="2">ANF 3-33</shortName>
        </alternativeName>
    </component>
    <component>
        <recommendedName>
            <fullName evidence="1">Atrial natriuretic peptide</fullName>
            <shortName evidence="1">ANP</shortName>
        </recommendedName>
        <alternativeName>
            <fullName evidence="1">Alpha-atrial natriuretic peptide</fullName>
        </alternativeName>
        <alternativeName>
            <fullName evidence="1">Alpha-hANP</fullName>
        </alternativeName>
        <alternativeName>
            <fullName evidence="1">Atrial natriuretic factor</fullName>
            <shortName evidence="1">ANF</shortName>
        </alternativeName>
        <alternativeName>
            <fullName evidence="1">CDD-ANF</fullName>
        </alternativeName>
        <alternativeName>
            <fullName evidence="1">CDD-ANP (99-126)</fullName>
        </alternativeName>
        <alternativeName>
            <fullName evidence="2">Cardionatrin</fullName>
        </alternativeName>
        <alternativeName>
            <fullName evidence="1">Pro atrial natriuretic factor 99-126</fullName>
            <shortName evidence="1">proANF 99-126</shortName>
        </alternativeName>
    </component>
    <component>
        <recommendedName>
            <fullName evidence="6">Auriculin-B</fullName>
        </recommendedName>
        <alternativeName>
            <fullName evidence="2">Atrial natriuretic factor 8-33</fullName>
            <shortName evidence="2">ANF 8-33</shortName>
        </alternativeName>
    </component>
    <component>
        <recommendedName>
            <fullName evidence="2">Auriculin-A</fullName>
        </recommendedName>
    </component>
    <component>
        <recommendedName>
            <fullName evidence="2">Atriopeptin-1</fullName>
        </recommendedName>
        <alternativeName>
            <fullName evidence="2">Atriopeptin I</fullName>
        </alternativeName>
    </component>
    <component>
        <recommendedName>
            <fullName evidence="2">Atriopeptin-2</fullName>
        </recommendedName>
        <alternativeName>
            <fullName evidence="2">Atriopeptin II</fullName>
        </alternativeName>
    </component>
    <component>
        <recommendedName>
            <fullName evidence="2">Atriopeptin-3</fullName>
        </recommendedName>
        <alternativeName>
            <fullName evidence="2">Atriopeptin III</fullName>
        </alternativeName>
    </component>
</protein>
<name>ANF_HORSE</name>
<comment type="function">
    <molecule>Atrial natriuretic peptide</molecule>
    <text evidence="1 3">Hormone that plays a key role in mediating cardio-renal homeostasis, and is involved in vascular remodeling and regulating energy metabolism (By similarity). Acts by specifically binding and stimulating NPR1 to produce cGMP, which in turn activates effector proteins, such as PRKG1, that drive various biological responses (By similarity). Regulates vasodilation, natriuresis, diuresis and aldosterone synthesis and is therefore essential for regulating blood pressure, controlling the extracellular fluid volume and maintaining the fluid-electrolyte balance (By similarity). Also involved in inhibiting cardiac remodeling and cardiac hypertrophy by inducing cardiomyocyte apoptosis and attenuating the growth of cardiomyocytes and fibroblasts (By similarity). Plays a role in female pregnancy by promoting trophoblast invasion and spiral artery remodeling in uterus, and thus prevents pregnancy-induced hypertension (By similarity). In adipose tissue, acts in various cGMP- and PKG-dependent pathways to regulate lipid metabolism and energy homeostasis (By similarity). This includes up-regulating lipid metabolism and mitochondrial oxygen utilization by activating the AMP-activated protein kinase (AMPK), and increasing energy expenditure by acting via MAPK11 to promote the UCP1-dependent thermogenesis of brown adipose tissue (By similarity). Binds the clearance receptor NPR3 which removes the hormone from circulation (By similarity).</text>
</comment>
<comment type="function">
    <molecule>Long-acting natriuretic peptide</molecule>
    <text evidence="1 2">May have a role in cardio-renal homeostasis through regulation of natriuresis, diuresis, vasodilation, and inhibiting aldosterone synthesis. In vitro, promotes the production of cGMP and induces vasodilation. May promote natriuresis, at least in part, by enhancing prostaglandin E2 synthesis resulting in the inhibition of renal Na+-K+-ATPase (By similarity). However reports on the involvement of this peptide in mammal blood volume and blood pressure homeostasis are conflicting; according to a report, in vivo it is not sufficient to activate cGMP and does not inhibit collecting duct transport nor effect diuresis and natriuresis (By similarity). Appears to bind to specific receptors that are distinct from the receptors bound by atrial natriuretic peptide and vessel dilator. Possibly enhances protein excretion in urine by decreasing proximal tubular protein reabsorption (By similarity).</text>
</comment>
<comment type="function">
    <molecule>Vessel dilator</molecule>
    <text evidence="1">May have a role in cardio-renal homeostasis through regulation of natriuresis, diuresis, and vasodilation. In vitro, promotes the production of cGMP and induces vasodilation. May promote natriuresis, at least in part, by enhancing prostaglandin E2 synthesis resulting in the inhibition of renal Na+-K+-ATPase. However reports on the involvement of this peptide in mammal blood volume and blood pressure homeostasis are conflicting; according to a report it is not sufficient to activate cGMP and does not inhibit collecting duct transport nor effect diuresis and natriuresis. Appears to bind to specific receptors that are distinct from the receptors bound by the atrial natriuretic and long-acting natriuretic peptides. Possibly functions in protein excretion in urine by maintaining the integrity of the proximal tubules and enhancing protein excretion by decreasing proximal tubular protein reabsorption.</text>
</comment>
<comment type="function">
    <molecule>Kaliuretic peptide</molecule>
    <text evidence="1">May have a role in cardio-renal homeostasis through regulation of diuresis and inhibiting aldosterone synthesis. In vitro, promotes the production of cGMP and induces vasodilation. May promote natriuresis, at least in part, by enhancing prostaglandin E2 synthesis resulting in the inhibition of renal Na+-K+-ATPase. May have a role in potassium excretion but not sodium excretion (natriuresis). Possibly enhances protein excretion in urine by decreasing proximal tubular protein reabsorption.</text>
</comment>
<comment type="function">
    <molecule>Urodilatin</molecule>
    <text evidence="1">Hormone produced in the kidneys that appears to be important for maintaining cardio-renal homeostasis. Mediates vasodilation, natriuresis and diuresis primarily in the renal system, in order to maintain the extracellular fluid volume and control the fluid-electrolyte balance. Specifically binds and stimulates cGMP production by renal transmembrane receptors, likely NPR1. Urodilatin not ANP, may be the natriuretic peptide responsible for the regulation of sodium and water homeostasis in the kidney.</text>
</comment>
<comment type="function">
    <molecule>Auriculin-D</molecule>
    <text evidence="2">May have a role in cardio-renal homeostasis through regulation of natriuresis and vasodilation. In vivo promotes natriuresis and in vitro, vasodilates renal artery strips.</text>
</comment>
<comment type="function">
    <molecule>Auriculin-B</molecule>
    <text evidence="2">May have a role in cardio-renal homeostasis through regulation of natriuresis and vasodilation. In vivo promotes natriuresis and in vitro, vasodilates renal artery strips.</text>
</comment>
<comment type="function">
    <molecule>Auriculin-A</molecule>
    <text evidence="2">May have a role in cardio-renal homeostasis through regulation of regulation of natriuresis and vasodilation. In vivo promotes natriuresis. In vitro, vasodilates intestinal smooth muscle but not smooth muscle strips.</text>
</comment>
<comment type="function">
    <molecule>Atriopeptin-2</molecule>
    <text evidence="2">May have a role in cardio-renal homeostasis through regulation of natriuresis and vasodilation. In vivo promotes natriuresis. In vitro, selectively vasodilates intestinal and vascular smooth muscle strips.</text>
</comment>
<comment type="function">
    <molecule>Atriopeptin-1</molecule>
    <text evidence="2">May have a role in cardio-renal homeostasis through regulation of natriuresis and vasodilation. In vivo promotes natriuresis. In vitro, selectively vasodilates intestinal smooth muscle but not vascular smooth muscle strips.</text>
</comment>
<comment type="subunit">
    <molecule>Atrial natriuretic peptide</molecule>
    <text evidence="1">Homodimer; disulfide-linked antiparallel dimer.</text>
</comment>
<comment type="subcellular location">
    <molecule>Long-acting natriuretic peptide</molecule>
    <subcellularLocation>
        <location evidence="1">Secreted</location>
    </subcellularLocation>
    <text evidence="1">Detected in blood.</text>
</comment>
<comment type="subcellular location">
    <molecule>Vessel dilator</molecule>
    <subcellularLocation>
        <location evidence="1">Secreted</location>
    </subcellularLocation>
    <text evidence="1">Detected in blood.</text>
</comment>
<comment type="subcellular location">
    <molecule>Kaliuretic peptide</molecule>
    <subcellularLocation>
        <location evidence="1">Secreted</location>
    </subcellularLocation>
    <text evidence="1">Detected in blood.</text>
</comment>
<comment type="subcellular location">
    <molecule>Urodilatin</molecule>
    <subcellularLocation>
        <location evidence="1">Secreted</location>
    </subcellularLocation>
    <text evidence="1">Detected in urine. Not detected in blood. Increased electrolytes, osmolality and intracellular cAMP levels increase peptide secretion/excretion.</text>
</comment>
<comment type="subcellular location">
    <molecule>Atrial natriuretic peptide</molecule>
    <subcellularLocation>
        <location evidence="1">Secreted</location>
    </subcellularLocation>
    <subcellularLocation>
        <location evidence="1">Perikaryon</location>
    </subcellularLocation>
    <subcellularLocation>
        <location evidence="1">Cell projection</location>
    </subcellularLocation>
    <text evidence="1 2">Detected in blood. Detected in urine in one study. However, in another study, was not detected in urine. Detected in cytoplasmic bodies and neuronal processes of pyramidal neurons (layers II-VI) (By similarity). Increased secretion in response to the vasopressin AVP (By similarity). Likely to be secreted in response to an increase in atrial pressure or atrial stretch. In kidney cells, secretion increases in response to activated guanylyl cyclases and increased intracellular cAMP levels. Plasma levels increase 15 minutes after a high-salt meal, and decrease back to normal plasma levels 1 hr later (By similarity).</text>
</comment>
<comment type="subcellular location">
    <molecule>Atriopeptin-3</molecule>
    <subcellularLocation>
        <location evidence="2">Secreted</location>
    </subcellularLocation>
    <text evidence="2">Detected in blood. Slight increase in secretion in response to the vasopressin AVP.</text>
</comment>
<comment type="PTM">
    <text evidence="1 2">The precursor molecule is proteolytically cleaved by CORIN at Arg-123 to produce the atrial natriuretic peptide (By similarity). Undergoes further proteolytic cleavage by unknown proteases to give rise to long-acting natriuretic peptide, vessel dilator and kaliuretic peptide (By similarity). Additional processing gives rise to the auriculin and atriopeptin peptides (By similarity). In the kidneys, alternative processing by an unknown protease results in the peptide urodilatin (By similarity).</text>
</comment>
<comment type="PTM">
    <molecule>Atrial natriuretic peptide</molecule>
    <text evidence="1">Cleavage by MME initiates degradation of the factor and thereby regulates its activity. Degradation by IDE results in reduced activation of NPR1 (in vitro). During IDE degradation, the resulting products can temporarily stimulate NPR2 to produce cGMP, before the fragments are completely degraded and inactivated by IDE (in vitro).</text>
</comment>
<comment type="PTM">
    <molecule>Urodilatin</molecule>
    <text evidence="1">Degraded by IDE.</text>
</comment>
<comment type="PTM">
    <molecule>Urodilatin</molecule>
    <text evidence="1">Phosphorylation on Ser-129 decreases vasorelaxant activity.</text>
</comment>
<comment type="similarity">
    <text evidence="6">Belongs to the natriuretic peptide family.</text>
</comment>
<comment type="caution">
    <molecule>Long-acting natriuretic peptide</molecule>
    <text evidence="1 2">Results concerning the involvement of this peptide in blood volume and blood pressure homeostasis are conflicting. Several studies utilising in vitro and heterologous expression systems show that it is able to activate cGMP and promote vasodilation and natriuresis (By similarity). However, an in vivo study in rat found that it is not sufficient to induce any diuretic, natriuretic, nor hypotensive responses, and is unable to bind NPR1 nor increase guanylyl cyclase activity (By similarity).</text>
</comment>
<comment type="caution">
    <molecule>Vessel dilator</molecule>
    <text evidence="1 2">Results concerning the involvement of this peptide in blood volume and blood pressure homeostasis are conflicting. Several studies utilising in vitro and heterologous expression systems show that it is able to activate cGMP and promote vasodilation and natriuresis (By similarity). However, a heterologous and in vivo expression study in rat found that it is not sufficient to induce any diuretic, natriuretic, nor hypotensive responses, and is unable to bind NPR1 nor increase guanylyl cyclase activity (By similarity).</text>
</comment>
<organism>
    <name type="scientific">Equus caballus</name>
    <name type="common">Horse</name>
    <dbReference type="NCBI Taxonomy" id="9796"/>
    <lineage>
        <taxon>Eukaryota</taxon>
        <taxon>Metazoa</taxon>
        <taxon>Chordata</taxon>
        <taxon>Craniata</taxon>
        <taxon>Vertebrata</taxon>
        <taxon>Euteleostomi</taxon>
        <taxon>Mammalia</taxon>
        <taxon>Eutheria</taxon>
        <taxon>Laurasiatheria</taxon>
        <taxon>Perissodactyla</taxon>
        <taxon>Equidae</taxon>
        <taxon>Equus</taxon>
    </lineage>
</organism>
<sequence>MGSFSTIMASFLLFLAFQLQGQTRANPVYGSVSNGDLMDFKNLLDRLEDKMPLEDEVMPPQVLSDQSEEERAALSPLPEVPPWTGEVNPAQRDGGALGRGSWDSSDRSALLKSKLRALLAAPRSLRRSSCFGGRMDRIGAQSGLGCNSFRYRR</sequence>